<dbReference type="EC" id="6.3.4.20" evidence="1"/>
<dbReference type="EMBL" id="CP000482">
    <property type="protein sequence ID" value="ABK98908.1"/>
    <property type="molecule type" value="Genomic_DNA"/>
</dbReference>
<dbReference type="RefSeq" id="WP_011735210.1">
    <property type="nucleotide sequence ID" value="NC_008609.1"/>
</dbReference>
<dbReference type="SMR" id="A1ANI8"/>
<dbReference type="STRING" id="338966.Ppro_1288"/>
<dbReference type="KEGG" id="ppd:Ppro_1288"/>
<dbReference type="eggNOG" id="COG0603">
    <property type="taxonomic scope" value="Bacteria"/>
</dbReference>
<dbReference type="HOGENOM" id="CLU_081854_1_1_7"/>
<dbReference type="OrthoDB" id="9789567at2"/>
<dbReference type="UniPathway" id="UPA00391"/>
<dbReference type="Proteomes" id="UP000006732">
    <property type="component" value="Chromosome"/>
</dbReference>
<dbReference type="GO" id="GO:0005524">
    <property type="term" value="F:ATP binding"/>
    <property type="evidence" value="ECO:0007669"/>
    <property type="project" value="UniProtKB-UniRule"/>
</dbReference>
<dbReference type="GO" id="GO:0016879">
    <property type="term" value="F:ligase activity, forming carbon-nitrogen bonds"/>
    <property type="evidence" value="ECO:0007669"/>
    <property type="project" value="UniProtKB-UniRule"/>
</dbReference>
<dbReference type="GO" id="GO:0008270">
    <property type="term" value="F:zinc ion binding"/>
    <property type="evidence" value="ECO:0007669"/>
    <property type="project" value="UniProtKB-UniRule"/>
</dbReference>
<dbReference type="GO" id="GO:0008616">
    <property type="term" value="P:queuosine biosynthetic process"/>
    <property type="evidence" value="ECO:0007669"/>
    <property type="project" value="UniProtKB-UniRule"/>
</dbReference>
<dbReference type="CDD" id="cd01995">
    <property type="entry name" value="QueC-like"/>
    <property type="match status" value="1"/>
</dbReference>
<dbReference type="FunFam" id="3.40.50.620:FF:000131">
    <property type="entry name" value="7-cyano-7-deazaguanine synthase"/>
    <property type="match status" value="1"/>
</dbReference>
<dbReference type="Gene3D" id="3.40.50.620">
    <property type="entry name" value="HUPs"/>
    <property type="match status" value="1"/>
</dbReference>
<dbReference type="HAMAP" id="MF_01633">
    <property type="entry name" value="QueC"/>
    <property type="match status" value="1"/>
</dbReference>
<dbReference type="InterPro" id="IPR018317">
    <property type="entry name" value="QueC"/>
</dbReference>
<dbReference type="InterPro" id="IPR014729">
    <property type="entry name" value="Rossmann-like_a/b/a_fold"/>
</dbReference>
<dbReference type="NCBIfam" id="TIGR00364">
    <property type="entry name" value="7-cyano-7-deazaguanine synthase QueC"/>
    <property type="match status" value="1"/>
</dbReference>
<dbReference type="PANTHER" id="PTHR42914">
    <property type="entry name" value="7-CYANO-7-DEAZAGUANINE SYNTHASE"/>
    <property type="match status" value="1"/>
</dbReference>
<dbReference type="PANTHER" id="PTHR42914:SF1">
    <property type="entry name" value="7-CYANO-7-DEAZAGUANINE SYNTHASE"/>
    <property type="match status" value="1"/>
</dbReference>
<dbReference type="Pfam" id="PF06508">
    <property type="entry name" value="QueC"/>
    <property type="match status" value="1"/>
</dbReference>
<dbReference type="PIRSF" id="PIRSF006293">
    <property type="entry name" value="ExsB"/>
    <property type="match status" value="1"/>
</dbReference>
<dbReference type="SUPFAM" id="SSF52402">
    <property type="entry name" value="Adenine nucleotide alpha hydrolases-like"/>
    <property type="match status" value="1"/>
</dbReference>
<keyword id="KW-0067">ATP-binding</keyword>
<keyword id="KW-0436">Ligase</keyword>
<keyword id="KW-0479">Metal-binding</keyword>
<keyword id="KW-0547">Nucleotide-binding</keyword>
<keyword id="KW-0671">Queuosine biosynthesis</keyword>
<keyword id="KW-1185">Reference proteome</keyword>
<keyword id="KW-0862">Zinc</keyword>
<accession>A1ANI8</accession>
<comment type="function">
    <text evidence="1">Catalyzes the ATP-dependent conversion of 7-carboxy-7-deazaguanine (CDG) to 7-cyano-7-deazaguanine (preQ(0)).</text>
</comment>
<comment type="catalytic activity">
    <reaction evidence="1">
        <text>7-carboxy-7-deazaguanine + NH4(+) + ATP = 7-cyano-7-deazaguanine + ADP + phosphate + H2O + H(+)</text>
        <dbReference type="Rhea" id="RHEA:27982"/>
        <dbReference type="ChEBI" id="CHEBI:15377"/>
        <dbReference type="ChEBI" id="CHEBI:15378"/>
        <dbReference type="ChEBI" id="CHEBI:28938"/>
        <dbReference type="ChEBI" id="CHEBI:30616"/>
        <dbReference type="ChEBI" id="CHEBI:43474"/>
        <dbReference type="ChEBI" id="CHEBI:45075"/>
        <dbReference type="ChEBI" id="CHEBI:61036"/>
        <dbReference type="ChEBI" id="CHEBI:456216"/>
        <dbReference type="EC" id="6.3.4.20"/>
    </reaction>
</comment>
<comment type="cofactor">
    <cofactor evidence="1">
        <name>Zn(2+)</name>
        <dbReference type="ChEBI" id="CHEBI:29105"/>
    </cofactor>
    <text evidence="1">Binds 1 zinc ion per subunit.</text>
</comment>
<comment type="pathway">
    <text evidence="1">Purine metabolism; 7-cyano-7-deazaguanine biosynthesis.</text>
</comment>
<comment type="similarity">
    <text evidence="1">Belongs to the QueC family.</text>
</comment>
<proteinExistence type="inferred from homology"/>
<gene>
    <name evidence="1" type="primary">queC</name>
    <name type="ordered locus">Ppro_1288</name>
</gene>
<reference key="1">
    <citation type="submission" date="2006-10" db="EMBL/GenBank/DDBJ databases">
        <title>Complete sequence of chromosome of Pelobacter propionicus DSM 2379.</title>
        <authorList>
            <consortium name="US DOE Joint Genome Institute"/>
            <person name="Copeland A."/>
            <person name="Lucas S."/>
            <person name="Lapidus A."/>
            <person name="Barry K."/>
            <person name="Detter J.C."/>
            <person name="Glavina del Rio T."/>
            <person name="Hammon N."/>
            <person name="Israni S."/>
            <person name="Dalin E."/>
            <person name="Tice H."/>
            <person name="Pitluck S."/>
            <person name="Saunders E."/>
            <person name="Brettin T."/>
            <person name="Bruce D."/>
            <person name="Han C."/>
            <person name="Tapia R."/>
            <person name="Schmutz J."/>
            <person name="Larimer F."/>
            <person name="Land M."/>
            <person name="Hauser L."/>
            <person name="Kyrpides N."/>
            <person name="Kim E."/>
            <person name="Lovley D."/>
            <person name="Richardson P."/>
        </authorList>
    </citation>
    <scope>NUCLEOTIDE SEQUENCE [LARGE SCALE GENOMIC DNA]</scope>
    <source>
        <strain>DSM 2379 / NBRC 103807 / OttBd1</strain>
    </source>
</reference>
<evidence type="ECO:0000255" key="1">
    <source>
        <dbReference type="HAMAP-Rule" id="MF_01633"/>
    </source>
</evidence>
<sequence length="226" mass="24246">MEKRAVVLYSGGLDSTTCLAMAKADGFAPYAMSFSYGQRHGFELEVAKANARPLGAVEHLVVDFDLRRMGGSALTDDISVPKEGVGSDIPVTYVPARNTIFLSFALGWAEVLGAFDIYIGVNSLDYSGYPDCRPEFVSAFEALANLATKSGVEGQGHFSIRTPLINMTKAEIIKAGVALGVDYSWTHSCYDPESDGTSCGRCDSCRLRLKGFAEAGLVDPLTYSGR</sequence>
<protein>
    <recommendedName>
        <fullName evidence="1">7-cyano-7-deazaguanine synthase</fullName>
        <ecNumber evidence="1">6.3.4.20</ecNumber>
    </recommendedName>
    <alternativeName>
        <fullName evidence="1">7-cyano-7-carbaguanine synthase</fullName>
    </alternativeName>
    <alternativeName>
        <fullName evidence="1">PreQ(0) synthase</fullName>
    </alternativeName>
    <alternativeName>
        <fullName evidence="1">Queuosine biosynthesis protein QueC</fullName>
    </alternativeName>
</protein>
<name>QUEC_PELPD</name>
<organism>
    <name type="scientific">Pelobacter propionicus (strain DSM 2379 / NBRC 103807 / OttBd1)</name>
    <dbReference type="NCBI Taxonomy" id="338966"/>
    <lineage>
        <taxon>Bacteria</taxon>
        <taxon>Pseudomonadati</taxon>
        <taxon>Thermodesulfobacteriota</taxon>
        <taxon>Desulfuromonadia</taxon>
        <taxon>Desulfuromonadales</taxon>
        <taxon>Desulfuromonadaceae</taxon>
        <taxon>Pelobacter</taxon>
    </lineage>
</organism>
<feature type="chain" id="PRO_1000073652" description="7-cyano-7-deazaguanine synthase">
    <location>
        <begin position="1"/>
        <end position="226"/>
    </location>
</feature>
<feature type="binding site" evidence="1">
    <location>
        <begin position="9"/>
        <end position="19"/>
    </location>
    <ligand>
        <name>ATP</name>
        <dbReference type="ChEBI" id="CHEBI:30616"/>
    </ligand>
</feature>
<feature type="binding site" evidence="1">
    <location>
        <position position="189"/>
    </location>
    <ligand>
        <name>Zn(2+)</name>
        <dbReference type="ChEBI" id="CHEBI:29105"/>
    </ligand>
</feature>
<feature type="binding site" evidence="1">
    <location>
        <position position="199"/>
    </location>
    <ligand>
        <name>Zn(2+)</name>
        <dbReference type="ChEBI" id="CHEBI:29105"/>
    </ligand>
</feature>
<feature type="binding site" evidence="1">
    <location>
        <position position="202"/>
    </location>
    <ligand>
        <name>Zn(2+)</name>
        <dbReference type="ChEBI" id="CHEBI:29105"/>
    </ligand>
</feature>
<feature type="binding site" evidence="1">
    <location>
        <position position="205"/>
    </location>
    <ligand>
        <name>Zn(2+)</name>
        <dbReference type="ChEBI" id="CHEBI:29105"/>
    </ligand>
</feature>